<name>BIGA_SALTY</name>
<accession>P25927</accession>
<accession>P25928</accession>
<accession>Q9XCQ3</accession>
<feature type="signal peptide" evidence="1">
    <location>
        <begin position="1"/>
        <end position="27"/>
    </location>
</feature>
<feature type="chain" id="PRO_0000020808" description="Putative surface-exposed virulence protein BigA">
    <location>
        <begin position="28"/>
        <end position="1953"/>
    </location>
</feature>
<feature type="repeat" description="1; truncated">
    <location>
        <begin position="101"/>
        <end position="103"/>
    </location>
</feature>
<feature type="repeat" description="2; truncated">
    <location>
        <begin position="104"/>
        <end position="113"/>
    </location>
</feature>
<feature type="repeat" description="3; truncated">
    <location>
        <begin position="114"/>
        <end position="122"/>
    </location>
</feature>
<feature type="repeat" description="4">
    <location>
        <begin position="123"/>
        <end position="133"/>
    </location>
</feature>
<feature type="repeat" description="5">
    <location>
        <begin position="134"/>
        <end position="144"/>
    </location>
</feature>
<feature type="repeat" description="6">
    <location>
        <begin position="145"/>
        <end position="155"/>
    </location>
</feature>
<feature type="repeat" description="7">
    <location>
        <begin position="156"/>
        <end position="166"/>
    </location>
</feature>
<feature type="repeat" description="8">
    <location>
        <begin position="167"/>
        <end position="177"/>
    </location>
</feature>
<feature type="repeat" description="9">
    <location>
        <begin position="178"/>
        <end position="188"/>
    </location>
</feature>
<feature type="repeat" description="10">
    <location>
        <begin position="189"/>
        <end position="199"/>
    </location>
</feature>
<feature type="repeat" description="11">
    <location>
        <begin position="200"/>
        <end position="210"/>
    </location>
</feature>
<feature type="repeat" description="12">
    <location>
        <begin position="211"/>
        <end position="221"/>
    </location>
</feature>
<feature type="repeat" description="13">
    <location>
        <begin position="222"/>
        <end position="232"/>
    </location>
</feature>
<feature type="repeat" description="14">
    <location>
        <begin position="233"/>
        <end position="243"/>
    </location>
</feature>
<feature type="repeat" description="15; truncated">
    <location>
        <begin position="244"/>
        <end position="252"/>
    </location>
</feature>
<feature type="domain" description="Autotransporter" evidence="2">
    <location>
        <begin position="1649"/>
        <end position="1952"/>
    </location>
</feature>
<feature type="region of interest" description="Disordered" evidence="3">
    <location>
        <begin position="31"/>
        <end position="50"/>
    </location>
</feature>
<feature type="region of interest" description="Disordered" evidence="3">
    <location>
        <begin position="88"/>
        <end position="258"/>
    </location>
</feature>
<feature type="region of interest" description="15 X 11 AA tandem repeats">
    <location>
        <begin position="101"/>
        <end position="252"/>
    </location>
</feature>
<feature type="region of interest" description="Disordered" evidence="3">
    <location>
        <begin position="1496"/>
        <end position="1517"/>
    </location>
</feature>
<feature type="compositionally biased region" description="Acidic residues" evidence="3">
    <location>
        <begin position="141"/>
        <end position="177"/>
    </location>
</feature>
<feature type="compositionally biased region" description="Acidic residues" evidence="3">
    <location>
        <begin position="185"/>
        <end position="249"/>
    </location>
</feature>
<feature type="sequence conflict" description="In Ref. 1; AAD39458." evidence="4" ref="1">
    <original>D</original>
    <variation>DRGDDDVTPPDD</variation>
    <location>
        <position position="207"/>
    </location>
</feature>
<feature type="sequence conflict" description="In Ref. 3; AAA27043." evidence="4" ref="3">
    <original>A</original>
    <variation>R</variation>
    <location>
        <position position="514"/>
    </location>
</feature>
<feature type="sequence conflict" description="In Ref. 1; AAD39458." evidence="4" ref="1">
    <original>D</original>
    <variation>N</variation>
    <location>
        <position position="1698"/>
    </location>
</feature>
<feature type="sequence conflict" description="In Ref. 1; AAD39458." evidence="4" ref="1">
    <original>QYLE</original>
    <variation>ITLQ</variation>
    <location>
        <begin position="1795"/>
        <end position="1798"/>
    </location>
</feature>
<feature type="sequence conflict" description="In Ref. 1; AAD39458." evidence="4" ref="1">
    <original>SA</original>
    <variation>T</variation>
    <location>
        <begin position="1836"/>
        <end position="1837"/>
    </location>
</feature>
<sequence>MNPMQKKKLISIAIALTLQSYYIPAIAAENNDDEKECPSNISSLPKEKRAKLSPTCLATPENDNHWGWVAGGVAALVAGVAIGVENNGGGDSNHSYTPPKPDNGGDVTPPDDGGNVTPPDDGGNVTPPDDGGDDNVTPPDDSGDDDVAPPDDSGDDDVTPPDDSGDDDVTPPDDSGDGDVTPPDDSGDDDVTPPDDSGDDDVTPPDDSGDDDVTPPDDSGDDDVTPPDDSGDDDVTPPDDSGDDDDTPPDDSVITFSNGVTIDKGKDTLTFDSFKLDNGSVLEGAVWNYSEQDNQWQLTTADGKTLNVTGWDVTDANAAVIEGTQENGLYWKYDSRGYLIIADDNTTVISGDDQAHNSDRGMDISGQDRTGVIISGDRTVNTLTGDSSVTDGATGMVISGDGTTNTISGHSTVDNATGALISGNGTTTNFAGDIAVSGGGTAIIIDGDNATIKNTGTSDISGAGSTGTVIDGNNARVNNDGDMTITDGGTGGHITGDNVVIDNAGSTTVSGADATALYIEGDNALVINEGNQTISGGAVGTRIDGDDAHTTNTGDIAVDGAGSAAVIINGDNGSLTQAGDLLVTDGAMGIITYGTGNEAKNTGNATVRDADSVGFVVAGEKNTFKNKGDIDVSLNGTGALVSGDMSQVTLDGDINVVSVQDSEGVFSSATGVSVSGDSNAVDITGNVNISADYGQDDLAAGAPPLTGVVVGGNGNTVTLNGALNIDDNDLSATGGQYLDVVGLSVTGDDNDVEIDGGINITHSEDPLDGTSADITGISVSGNSTVTLNGHSTIDTNTVVGGHVVLARVNNGGSLILGDDSVVDVNVSYIPTGYYTYNALLMADGEGTSIENKGDITSHGVYSVIRADNGSEVSNSGDILVYATSSNSSEDRAAITRASGEGSAVHNKAGGDITLISDQTPQGSGGIEVYPLKWYTHTFYAMMASDYGDVVNDEGATIHLQGAGVYGVTASRGKALNEGNIYLDGLVPTLDDENNITSTSYWQPSSLYLTSSGMVAGSTDADGDATAINTGNITVNNAGFGMMALNGGTAINQGVITLTADDGVTGQADELVGMAALNGGVVINDTSGVINIDADYGQAFLSDSSSYIINNGSINLNGSPMDDTDSHMGGTPTDKIWIQSLPGSGDSDTRTSDTGFFTAGTLANYGTETLNGDVDVNGGWLYNEAGASLTVNGTVTINGGANALANYGTLDADAISTWHSLFNEADGSITTDLLTLNGDVTFYNNGDFTGSIAGTSYQQEIVNTGDMTVAEDGKSLVSGSFYFYNEEDATLTNSGSAVEGGENTIINLTRANDSLTQVNSGTITATNGYSAITTVNGSNDPKWIWNTATGVINGINPDAPLINLGRGYNFGNQGTINVQGDNAVAISGGTSSYVINLVNSGTINVGTEQGKEDGTNGTGLIGIKGNGNATTINNTADGVINVYADDSYAFGGKTKAIINNGEINLLCDSGCDIYAPGTTGTQNDHNGTADIVIPDATTAPTEGSIPTPPADPNAPQQLSNYIVGTNADGSSGTLKANNLVIGDNVKVDTGFTSGTADTTVVVDNAFTGSNIQGADNITSTSVVWNAQGSQDADGNVDVTMTKNAYADVATDSSVSDVAQALDAGYTNNELYTSLNVGTTAELNSALKQVSGAQATTVFREARVLSNRFTMLADAAPQIKDGLAFNVVAKGDPRAELGNDTQYDMLALRQTLDLTASQNLTLEYGIARLDGDGSKTAGDNGLTGGYSQFFGLKHSMAFDEGLAWNNSLRYDVHNLDSSRSVAYGDVNKIADSDMRQQYLEFRSEGAKTFTMMGDALKVTPYAGVKFRHTMEDGYKERSAGDFNLSMNSGNETAVDSIVGLKLDYAGKDGWSATATLEGGPNLSYSKSQRTASLQGAAGQSFGVDDGQKGGGVNGLATIGVKYSSNDTALHLDAYQWKEDGISDKGFMLNVKKTFR</sequence>
<keyword id="KW-1185">Reference proteome</keyword>
<keyword id="KW-0677">Repeat</keyword>
<keyword id="KW-0732">Signal</keyword>
<keyword id="KW-0843">Virulence</keyword>
<reference key="1">
    <citation type="submission" date="1999-03" db="EMBL/GenBank/DDBJ databases">
        <title>Salmonella typhimurium rhs homolog.</title>
        <authorList>
            <person name="Stojiljkovic I."/>
            <person name="Valentine P."/>
            <person name="Heffron F."/>
        </authorList>
    </citation>
    <scope>NUCLEOTIDE SEQUENCE [GENOMIC DNA]</scope>
    <source>
        <strain>ATCC 14028 / SGSG 2980 / CDC 6516-60 / NCTC 12023</strain>
    </source>
</reference>
<reference key="2">
    <citation type="journal article" date="2001" name="Nature">
        <title>Complete genome sequence of Salmonella enterica serovar Typhimurium LT2.</title>
        <authorList>
            <person name="McClelland M."/>
            <person name="Sanderson K.E."/>
            <person name="Spieth J."/>
            <person name="Clifton S.W."/>
            <person name="Latreille P."/>
            <person name="Courtney L."/>
            <person name="Porwollik S."/>
            <person name="Ali J."/>
            <person name="Dante M."/>
            <person name="Du F."/>
            <person name="Hou S."/>
            <person name="Layman D."/>
            <person name="Leonard S."/>
            <person name="Nguyen C."/>
            <person name="Scott K."/>
            <person name="Holmes A."/>
            <person name="Grewal N."/>
            <person name="Mulvaney E."/>
            <person name="Ryan E."/>
            <person name="Sun H."/>
            <person name="Florea L."/>
            <person name="Miller W."/>
            <person name="Stoneking T."/>
            <person name="Nhan M."/>
            <person name="Waterston R."/>
            <person name="Wilson R.K."/>
        </authorList>
    </citation>
    <scope>NUCLEOTIDE SEQUENCE [LARGE SCALE GENOMIC DNA]</scope>
    <source>
        <strain>LT2 / SGSC1412 / ATCC 700720</strain>
    </source>
</reference>
<reference key="3">
    <citation type="journal article" date="1991" name="J. Bacteriol.">
        <title>High-level expression of Escherichia coli NADPH-sulfite reductase: requirement for a cloned cysG plasmid to overcome limiting siroheme cofactor.</title>
        <authorList>
            <person name="Wu J.Y."/>
            <person name="Siegel L.M."/>
            <person name="Kredich N.M."/>
        </authorList>
    </citation>
    <scope>NUCLEOTIDE SEQUENCE [GENOMIC DNA] OF 1-765</scope>
    <source>
        <strain>LT2</strain>
    </source>
</reference>
<protein>
    <recommendedName>
        <fullName>Putative surface-exposed virulence protein BigA</fullName>
    </recommendedName>
</protein>
<dbReference type="EMBL" id="AF133696">
    <property type="protein sequence ID" value="AAD39458.1"/>
    <property type="molecule type" value="Genomic_DNA"/>
</dbReference>
<dbReference type="EMBL" id="AE006468">
    <property type="protein sequence ID" value="AAL22340.1"/>
    <property type="molecule type" value="Genomic_DNA"/>
</dbReference>
<dbReference type="EMBL" id="M64606">
    <property type="protein sequence ID" value="AAA27042.1"/>
    <property type="status" value="ALT_SEQ"/>
    <property type="molecule type" value="Genomic_DNA"/>
</dbReference>
<dbReference type="EMBL" id="M64606">
    <property type="protein sequence ID" value="AAA27043.1"/>
    <property type="status" value="ALT_FRAME"/>
    <property type="molecule type" value="Genomic_DNA"/>
</dbReference>
<dbReference type="PIR" id="C39200">
    <property type="entry name" value="C39200"/>
</dbReference>
<dbReference type="PIR" id="D39200">
    <property type="entry name" value="D39200"/>
</dbReference>
<dbReference type="RefSeq" id="NP_462381.1">
    <property type="nucleotide sequence ID" value="NC_003197.2"/>
</dbReference>
<dbReference type="RefSeq" id="WP_010989077.1">
    <property type="nucleotide sequence ID" value="NC_003197.2"/>
</dbReference>
<dbReference type="STRING" id="99287.STM3478"/>
<dbReference type="TCDB" id="1.B.12.5.5">
    <property type="family name" value="the autotransporter-1 (at-1) family"/>
</dbReference>
<dbReference type="PaxDb" id="99287-STM3478"/>
<dbReference type="GeneID" id="1255001"/>
<dbReference type="KEGG" id="stm:STM3478"/>
<dbReference type="PATRIC" id="fig|99287.12.peg.3676"/>
<dbReference type="HOGENOM" id="CLU_000396_0_1_6"/>
<dbReference type="PhylomeDB" id="P25927"/>
<dbReference type="BioCyc" id="SENT99287:STM3478-MONOMER"/>
<dbReference type="Proteomes" id="UP000001014">
    <property type="component" value="Chromosome"/>
</dbReference>
<dbReference type="InterPro" id="IPR005546">
    <property type="entry name" value="Autotransporte_beta"/>
</dbReference>
<dbReference type="InterPro" id="IPR036709">
    <property type="entry name" value="Autotransporte_beta_dom_sf"/>
</dbReference>
<dbReference type="InterPro" id="IPR049865">
    <property type="entry name" value="BigA-like"/>
</dbReference>
<dbReference type="NCBIfam" id="NF033178">
    <property type="entry name" value="auto_BigA"/>
    <property type="match status" value="1"/>
</dbReference>
<dbReference type="SMART" id="SM00869">
    <property type="entry name" value="Autotransporter"/>
    <property type="match status" value="1"/>
</dbReference>
<dbReference type="SUPFAM" id="SSF103515">
    <property type="entry name" value="Autotransporter"/>
    <property type="match status" value="1"/>
</dbReference>
<dbReference type="PROSITE" id="PS51208">
    <property type="entry name" value="AUTOTRANSPORTER"/>
    <property type="match status" value="1"/>
</dbReference>
<comment type="sequence caution" evidence="4">
    <conflict type="erroneous initiation">
        <sequence resource="EMBL-CDS" id="AAA27042"/>
    </conflict>
    <text>Truncated N-terminus.</text>
</comment>
<comment type="sequence caution" evidence="4">
    <conflict type="frameshift">
        <sequence resource="EMBL-CDS" id="AAA27042"/>
    </conflict>
</comment>
<comment type="sequence caution" evidence="4">
    <conflict type="frameshift">
        <sequence resource="EMBL-CDS" id="AAA27043"/>
    </conflict>
</comment>
<proteinExistence type="inferred from homology"/>
<evidence type="ECO:0000255" key="1"/>
<evidence type="ECO:0000255" key="2">
    <source>
        <dbReference type="PROSITE-ProRule" id="PRU00556"/>
    </source>
</evidence>
<evidence type="ECO:0000256" key="3">
    <source>
        <dbReference type="SAM" id="MobiDB-lite"/>
    </source>
</evidence>
<evidence type="ECO:0000305" key="4"/>
<gene>
    <name type="primary">bigA</name>
    <name type="ordered locus">STM3478</name>
</gene>
<organism>
    <name type="scientific">Salmonella typhimurium (strain LT2 / SGSC1412 / ATCC 700720)</name>
    <dbReference type="NCBI Taxonomy" id="99287"/>
    <lineage>
        <taxon>Bacteria</taxon>
        <taxon>Pseudomonadati</taxon>
        <taxon>Pseudomonadota</taxon>
        <taxon>Gammaproteobacteria</taxon>
        <taxon>Enterobacterales</taxon>
        <taxon>Enterobacteriaceae</taxon>
        <taxon>Salmonella</taxon>
    </lineage>
</organism>